<protein>
    <recommendedName>
        <fullName>Thioredoxin domain-containing protein 9</fullName>
    </recommendedName>
    <alternativeName>
        <fullName>ATP-binding protein associated with cell differentiation</fullName>
    </alternativeName>
</protein>
<name>TXND9_MOUSE</name>
<reference key="1">
    <citation type="journal article" date="2005" name="Science">
        <title>The transcriptional landscape of the mammalian genome.</title>
        <authorList>
            <person name="Carninci P."/>
            <person name="Kasukawa T."/>
            <person name="Katayama S."/>
            <person name="Gough J."/>
            <person name="Frith M.C."/>
            <person name="Maeda N."/>
            <person name="Oyama R."/>
            <person name="Ravasi T."/>
            <person name="Lenhard B."/>
            <person name="Wells C."/>
            <person name="Kodzius R."/>
            <person name="Shimokawa K."/>
            <person name="Bajic V.B."/>
            <person name="Brenner S.E."/>
            <person name="Batalov S."/>
            <person name="Forrest A.R."/>
            <person name="Zavolan M."/>
            <person name="Davis M.J."/>
            <person name="Wilming L.G."/>
            <person name="Aidinis V."/>
            <person name="Allen J.E."/>
            <person name="Ambesi-Impiombato A."/>
            <person name="Apweiler R."/>
            <person name="Aturaliya R.N."/>
            <person name="Bailey T.L."/>
            <person name="Bansal M."/>
            <person name="Baxter L."/>
            <person name="Beisel K.W."/>
            <person name="Bersano T."/>
            <person name="Bono H."/>
            <person name="Chalk A.M."/>
            <person name="Chiu K.P."/>
            <person name="Choudhary V."/>
            <person name="Christoffels A."/>
            <person name="Clutterbuck D.R."/>
            <person name="Crowe M.L."/>
            <person name="Dalla E."/>
            <person name="Dalrymple B.P."/>
            <person name="de Bono B."/>
            <person name="Della Gatta G."/>
            <person name="di Bernardo D."/>
            <person name="Down T."/>
            <person name="Engstrom P."/>
            <person name="Fagiolini M."/>
            <person name="Faulkner G."/>
            <person name="Fletcher C.F."/>
            <person name="Fukushima T."/>
            <person name="Furuno M."/>
            <person name="Futaki S."/>
            <person name="Gariboldi M."/>
            <person name="Georgii-Hemming P."/>
            <person name="Gingeras T.R."/>
            <person name="Gojobori T."/>
            <person name="Green R.E."/>
            <person name="Gustincich S."/>
            <person name="Harbers M."/>
            <person name="Hayashi Y."/>
            <person name="Hensch T.K."/>
            <person name="Hirokawa N."/>
            <person name="Hill D."/>
            <person name="Huminiecki L."/>
            <person name="Iacono M."/>
            <person name="Ikeo K."/>
            <person name="Iwama A."/>
            <person name="Ishikawa T."/>
            <person name="Jakt M."/>
            <person name="Kanapin A."/>
            <person name="Katoh M."/>
            <person name="Kawasawa Y."/>
            <person name="Kelso J."/>
            <person name="Kitamura H."/>
            <person name="Kitano H."/>
            <person name="Kollias G."/>
            <person name="Krishnan S.P."/>
            <person name="Kruger A."/>
            <person name="Kummerfeld S.K."/>
            <person name="Kurochkin I.V."/>
            <person name="Lareau L.F."/>
            <person name="Lazarevic D."/>
            <person name="Lipovich L."/>
            <person name="Liu J."/>
            <person name="Liuni S."/>
            <person name="McWilliam S."/>
            <person name="Madan Babu M."/>
            <person name="Madera M."/>
            <person name="Marchionni L."/>
            <person name="Matsuda H."/>
            <person name="Matsuzawa S."/>
            <person name="Miki H."/>
            <person name="Mignone F."/>
            <person name="Miyake S."/>
            <person name="Morris K."/>
            <person name="Mottagui-Tabar S."/>
            <person name="Mulder N."/>
            <person name="Nakano N."/>
            <person name="Nakauchi H."/>
            <person name="Ng P."/>
            <person name="Nilsson R."/>
            <person name="Nishiguchi S."/>
            <person name="Nishikawa S."/>
            <person name="Nori F."/>
            <person name="Ohara O."/>
            <person name="Okazaki Y."/>
            <person name="Orlando V."/>
            <person name="Pang K.C."/>
            <person name="Pavan W.J."/>
            <person name="Pavesi G."/>
            <person name="Pesole G."/>
            <person name="Petrovsky N."/>
            <person name="Piazza S."/>
            <person name="Reed J."/>
            <person name="Reid J.F."/>
            <person name="Ring B.Z."/>
            <person name="Ringwald M."/>
            <person name="Rost B."/>
            <person name="Ruan Y."/>
            <person name="Salzberg S.L."/>
            <person name="Sandelin A."/>
            <person name="Schneider C."/>
            <person name="Schoenbach C."/>
            <person name="Sekiguchi K."/>
            <person name="Semple C.A."/>
            <person name="Seno S."/>
            <person name="Sessa L."/>
            <person name="Sheng Y."/>
            <person name="Shibata Y."/>
            <person name="Shimada H."/>
            <person name="Shimada K."/>
            <person name="Silva D."/>
            <person name="Sinclair B."/>
            <person name="Sperling S."/>
            <person name="Stupka E."/>
            <person name="Sugiura K."/>
            <person name="Sultana R."/>
            <person name="Takenaka Y."/>
            <person name="Taki K."/>
            <person name="Tammoja K."/>
            <person name="Tan S.L."/>
            <person name="Tang S."/>
            <person name="Taylor M.S."/>
            <person name="Tegner J."/>
            <person name="Teichmann S.A."/>
            <person name="Ueda H.R."/>
            <person name="van Nimwegen E."/>
            <person name="Verardo R."/>
            <person name="Wei C.L."/>
            <person name="Yagi K."/>
            <person name="Yamanishi H."/>
            <person name="Zabarovsky E."/>
            <person name="Zhu S."/>
            <person name="Zimmer A."/>
            <person name="Hide W."/>
            <person name="Bult C."/>
            <person name="Grimmond S.M."/>
            <person name="Teasdale R.D."/>
            <person name="Liu E.T."/>
            <person name="Brusic V."/>
            <person name="Quackenbush J."/>
            <person name="Wahlestedt C."/>
            <person name="Mattick J.S."/>
            <person name="Hume D.A."/>
            <person name="Kai C."/>
            <person name="Sasaki D."/>
            <person name="Tomaru Y."/>
            <person name="Fukuda S."/>
            <person name="Kanamori-Katayama M."/>
            <person name="Suzuki M."/>
            <person name="Aoki J."/>
            <person name="Arakawa T."/>
            <person name="Iida J."/>
            <person name="Imamura K."/>
            <person name="Itoh M."/>
            <person name="Kato T."/>
            <person name="Kawaji H."/>
            <person name="Kawagashira N."/>
            <person name="Kawashima T."/>
            <person name="Kojima M."/>
            <person name="Kondo S."/>
            <person name="Konno H."/>
            <person name="Nakano K."/>
            <person name="Ninomiya N."/>
            <person name="Nishio T."/>
            <person name="Okada M."/>
            <person name="Plessy C."/>
            <person name="Shibata K."/>
            <person name="Shiraki T."/>
            <person name="Suzuki S."/>
            <person name="Tagami M."/>
            <person name="Waki K."/>
            <person name="Watahiki A."/>
            <person name="Okamura-Oho Y."/>
            <person name="Suzuki H."/>
            <person name="Kawai J."/>
            <person name="Hayashizaki Y."/>
        </authorList>
    </citation>
    <scope>NUCLEOTIDE SEQUENCE [LARGE SCALE MRNA]</scope>
    <source>
        <strain>C57BL/6J</strain>
        <tissue>Embryo</tissue>
        <tissue>Embryonic stem cell</tissue>
        <tissue>Kidney</tissue>
        <tissue>Skin</tissue>
        <tissue>Testis</tissue>
        <tissue>Thymus</tissue>
    </source>
</reference>
<reference key="2">
    <citation type="journal article" date="2004" name="Genome Res.">
        <title>The status, quality, and expansion of the NIH full-length cDNA project: the Mammalian Gene Collection (MGC).</title>
        <authorList>
            <consortium name="The MGC Project Team"/>
        </authorList>
    </citation>
    <scope>NUCLEOTIDE SEQUENCE [LARGE SCALE MRNA]</scope>
    <source>
        <tissue>Eye</tissue>
    </source>
</reference>
<reference key="3">
    <citation type="journal article" date="2004" name="Genes Cells">
        <title>An evolutionarily conserved gene required for proper microtubule architecture in Caenorhabditis elegans.</title>
        <authorList>
            <person name="Ogawa S."/>
            <person name="Matsubayashi Y."/>
            <person name="Nishida E."/>
        </authorList>
    </citation>
    <scope>SUBCELLULAR LOCATION</scope>
    <scope>TISSUE SPECIFICITY</scope>
</reference>
<reference key="4">
    <citation type="journal article" date="2010" name="Cell">
        <title>A tissue-specific atlas of mouse protein phosphorylation and expression.</title>
        <authorList>
            <person name="Huttlin E.L."/>
            <person name="Jedrychowski M.P."/>
            <person name="Elias J.E."/>
            <person name="Goswami T."/>
            <person name="Rad R."/>
            <person name="Beausoleil S.A."/>
            <person name="Villen J."/>
            <person name="Haas W."/>
            <person name="Sowa M.E."/>
            <person name="Gygi S.P."/>
        </authorList>
    </citation>
    <scope>IDENTIFICATION BY MASS SPECTROMETRY [LARGE SCALE ANALYSIS]</scope>
    <source>
        <tissue>Brain</tissue>
        <tissue>Brown adipose tissue</tissue>
        <tissue>Heart</tissue>
        <tissue>Kidney</tissue>
        <tissue>Lung</tissue>
        <tissue>Pancreas</tissue>
        <tissue>Spleen</tissue>
        <tissue>Testis</tissue>
    </source>
</reference>
<keyword id="KW-0963">Cytoplasm</keyword>
<keyword id="KW-0206">Cytoskeleton</keyword>
<keyword id="KW-0539">Nucleus</keyword>
<keyword id="KW-0597">Phosphoprotein</keyword>
<keyword id="KW-1185">Reference proteome</keyword>
<organism>
    <name type="scientific">Mus musculus</name>
    <name type="common">Mouse</name>
    <dbReference type="NCBI Taxonomy" id="10090"/>
    <lineage>
        <taxon>Eukaryota</taxon>
        <taxon>Metazoa</taxon>
        <taxon>Chordata</taxon>
        <taxon>Craniata</taxon>
        <taxon>Vertebrata</taxon>
        <taxon>Euteleostomi</taxon>
        <taxon>Mammalia</taxon>
        <taxon>Eutheria</taxon>
        <taxon>Euarchontoglires</taxon>
        <taxon>Glires</taxon>
        <taxon>Rodentia</taxon>
        <taxon>Myomorpha</taxon>
        <taxon>Muroidea</taxon>
        <taxon>Muridae</taxon>
        <taxon>Murinae</taxon>
        <taxon>Mus</taxon>
        <taxon>Mus</taxon>
    </lineage>
</organism>
<feature type="chain" id="PRO_0000120167" description="Thioredoxin domain-containing protein 9">
    <location>
        <begin position="1"/>
        <end position="226"/>
    </location>
</feature>
<feature type="domain" description="Thioredoxin">
    <location>
        <begin position="75"/>
        <end position="180"/>
    </location>
</feature>
<feature type="modified residue" description="Phosphoserine" evidence="2">
    <location>
        <position position="188"/>
    </location>
</feature>
<feature type="modified residue" description="Phosphoserine" evidence="2">
    <location>
        <position position="221"/>
    </location>
</feature>
<feature type="modified residue" description="Phosphoserine" evidence="2">
    <location>
        <position position="223"/>
    </location>
</feature>
<proteinExistence type="evidence at protein level"/>
<gene>
    <name type="primary">Txndc9</name>
    <name type="synonym">Apacd</name>
</gene>
<comment type="function">
    <text evidence="2">Significantly diminishes the chaperonin TCP1 complex ATPase activity, thus negatively impacts protein folding, including that of actin or tubulin.</text>
</comment>
<comment type="subunit">
    <text evidence="1">Forms ternary complexes with the chaperonin TCP1 complex, spanning the cylindrical chaperonin cavity and contacting at least 2 subunits.</text>
</comment>
<comment type="subcellular location">
    <subcellularLocation>
        <location evidence="3">Cytoplasm</location>
    </subcellularLocation>
    <subcellularLocation>
        <location evidence="3">Nucleus</location>
    </subcellularLocation>
    <subcellularLocation>
        <location evidence="3">Cytoplasm</location>
        <location evidence="3">Cytoskeleton</location>
        <location evidence="3">Microtubule organizing center</location>
        <location evidence="3">Centrosome</location>
    </subcellularLocation>
    <subcellularLocation>
        <location evidence="3">Midbody</location>
    </subcellularLocation>
    <text evidence="3">Co-localizes with beta-tubulin in the centrosome.</text>
</comment>
<comment type="tissue specificity">
    <text evidence="3">Expressed in testis, liver, heart, kidney, brain, spleen and lung.</text>
</comment>
<dbReference type="EMBL" id="AK002893">
    <property type="protein sequence ID" value="BAB22438.1"/>
    <property type="molecule type" value="mRNA"/>
</dbReference>
<dbReference type="EMBL" id="AK006170">
    <property type="protein sequence ID" value="BAB24440.1"/>
    <property type="molecule type" value="mRNA"/>
</dbReference>
<dbReference type="EMBL" id="AK010709">
    <property type="protein sequence ID" value="BAB27134.1"/>
    <property type="molecule type" value="mRNA"/>
</dbReference>
<dbReference type="EMBL" id="AK011424">
    <property type="protein sequence ID" value="BAB27611.1"/>
    <property type="molecule type" value="mRNA"/>
</dbReference>
<dbReference type="EMBL" id="AK016756">
    <property type="protein sequence ID" value="BAB30412.1"/>
    <property type="molecule type" value="mRNA"/>
</dbReference>
<dbReference type="EMBL" id="AK028525">
    <property type="protein sequence ID" value="BAC25991.1"/>
    <property type="molecule type" value="mRNA"/>
</dbReference>
<dbReference type="EMBL" id="AK153857">
    <property type="protein sequence ID" value="BAE32213.1"/>
    <property type="molecule type" value="mRNA"/>
</dbReference>
<dbReference type="EMBL" id="AK167045">
    <property type="protein sequence ID" value="BAE39213.1"/>
    <property type="molecule type" value="mRNA"/>
</dbReference>
<dbReference type="EMBL" id="BC022947">
    <property type="protein sequence ID" value="AAH22947.1"/>
    <property type="molecule type" value="mRNA"/>
</dbReference>
<dbReference type="EMBL" id="BC083077">
    <property type="protein sequence ID" value="AAH83077.1"/>
    <property type="molecule type" value="mRNA"/>
</dbReference>
<dbReference type="CCDS" id="CCDS14898.1"/>
<dbReference type="RefSeq" id="NP_001404865.1">
    <property type="nucleotide sequence ID" value="NM_001417936.1"/>
</dbReference>
<dbReference type="RefSeq" id="NP_001404866.1">
    <property type="nucleotide sequence ID" value="NM_001417937.1"/>
</dbReference>
<dbReference type="RefSeq" id="NP_742051.1">
    <property type="nucleotide sequence ID" value="NM_172054.5"/>
</dbReference>
<dbReference type="RefSeq" id="XP_006496420.1">
    <property type="nucleotide sequence ID" value="XM_006496357.3"/>
</dbReference>
<dbReference type="RefSeq" id="XP_006496421.1">
    <property type="nucleotide sequence ID" value="XM_006496358.3"/>
</dbReference>
<dbReference type="SMR" id="Q9CQ79"/>
<dbReference type="BioGRID" id="221025">
    <property type="interactions" value="3"/>
</dbReference>
<dbReference type="FunCoup" id="Q9CQ79">
    <property type="interactions" value="3749"/>
</dbReference>
<dbReference type="STRING" id="10090.ENSMUSP00000125491"/>
<dbReference type="iPTMnet" id="Q9CQ79"/>
<dbReference type="PhosphoSitePlus" id="Q9CQ79"/>
<dbReference type="PaxDb" id="10090-ENSMUSP00000125491"/>
<dbReference type="PeptideAtlas" id="Q9CQ79"/>
<dbReference type="ProteomicsDB" id="298343"/>
<dbReference type="Pumba" id="Q9CQ79"/>
<dbReference type="Antibodypedia" id="32814">
    <property type="antibodies" value="145 antibodies from 27 providers"/>
</dbReference>
<dbReference type="DNASU" id="98258"/>
<dbReference type="Ensembl" id="ENSMUST00000162031.8">
    <property type="protein sequence ID" value="ENSMUSP00000125491.2"/>
    <property type="gene ID" value="ENSMUSG00000058407.13"/>
</dbReference>
<dbReference type="Ensembl" id="ENSMUST00000195032.6">
    <property type="protein sequence ID" value="ENSMUSP00000141595.2"/>
    <property type="gene ID" value="ENSMUSG00000058407.13"/>
</dbReference>
<dbReference type="Ensembl" id="ENSMUST00000195247.6">
    <property type="protein sequence ID" value="ENSMUSP00000141609.2"/>
    <property type="gene ID" value="ENSMUSG00000058407.13"/>
</dbReference>
<dbReference type="GeneID" id="98258"/>
<dbReference type="KEGG" id="mmu:98258"/>
<dbReference type="UCSC" id="uc007asm.1">
    <property type="organism name" value="mouse"/>
</dbReference>
<dbReference type="AGR" id="MGI:2138153"/>
<dbReference type="CTD" id="10190"/>
<dbReference type="MGI" id="MGI:2138153">
    <property type="gene designation" value="Txndc9"/>
</dbReference>
<dbReference type="VEuPathDB" id="HostDB:ENSMUSG00000058407"/>
<dbReference type="eggNOG" id="KOG1672">
    <property type="taxonomic scope" value="Eukaryota"/>
</dbReference>
<dbReference type="GeneTree" id="ENSGT00390000015645"/>
<dbReference type="InParanoid" id="Q9CQ79"/>
<dbReference type="OMA" id="CVIAFID"/>
<dbReference type="OrthoDB" id="10257948at2759"/>
<dbReference type="PhylomeDB" id="Q9CQ79"/>
<dbReference type="TreeFam" id="TF313442"/>
<dbReference type="BioGRID-ORCS" id="98258">
    <property type="hits" value="3 hits in 75 CRISPR screens"/>
</dbReference>
<dbReference type="ChiTaRS" id="Txndc9">
    <property type="organism name" value="mouse"/>
</dbReference>
<dbReference type="PRO" id="PR:Q9CQ79"/>
<dbReference type="Proteomes" id="UP000000589">
    <property type="component" value="Chromosome 1"/>
</dbReference>
<dbReference type="RNAct" id="Q9CQ79">
    <property type="molecule type" value="protein"/>
</dbReference>
<dbReference type="Bgee" id="ENSMUSG00000058407">
    <property type="expression patterns" value="Expressed in embryonic cell in blastocyst and 152 other cell types or tissues"/>
</dbReference>
<dbReference type="ExpressionAtlas" id="Q9CQ79">
    <property type="expression patterns" value="baseline and differential"/>
</dbReference>
<dbReference type="GO" id="GO:0005813">
    <property type="term" value="C:centrosome"/>
    <property type="evidence" value="ECO:0000314"/>
    <property type="project" value="MGI"/>
</dbReference>
<dbReference type="GO" id="GO:0005737">
    <property type="term" value="C:cytoplasm"/>
    <property type="evidence" value="ECO:0000314"/>
    <property type="project" value="MGI"/>
</dbReference>
<dbReference type="GO" id="GO:0005829">
    <property type="term" value="C:cytosol"/>
    <property type="evidence" value="ECO:0007669"/>
    <property type="project" value="Ensembl"/>
</dbReference>
<dbReference type="GO" id="GO:0030496">
    <property type="term" value="C:midbody"/>
    <property type="evidence" value="ECO:0000314"/>
    <property type="project" value="MGI"/>
</dbReference>
<dbReference type="GO" id="GO:0005634">
    <property type="term" value="C:nucleus"/>
    <property type="evidence" value="ECO:0000314"/>
    <property type="project" value="MGI"/>
</dbReference>
<dbReference type="CDD" id="cd02989">
    <property type="entry name" value="Phd_like_TxnDC9"/>
    <property type="match status" value="1"/>
</dbReference>
<dbReference type="FunFam" id="3.40.30.10:FF:000141">
    <property type="entry name" value="Thioredoxin domain-containing protein 9"/>
    <property type="match status" value="1"/>
</dbReference>
<dbReference type="Gene3D" id="3.40.30.10">
    <property type="entry name" value="Glutaredoxin"/>
    <property type="match status" value="1"/>
</dbReference>
<dbReference type="InterPro" id="IPR036249">
    <property type="entry name" value="Thioredoxin-like_sf"/>
</dbReference>
<dbReference type="InterPro" id="IPR013766">
    <property type="entry name" value="Thioredoxin_domain"/>
</dbReference>
<dbReference type="PANTHER" id="PTHR21148">
    <property type="entry name" value="THIOREDOXIN DOMAIN-CONTAINING PROTEIN 9"/>
    <property type="match status" value="1"/>
</dbReference>
<dbReference type="Pfam" id="PF00085">
    <property type="entry name" value="Thioredoxin"/>
    <property type="match status" value="1"/>
</dbReference>
<dbReference type="SUPFAM" id="SSF52833">
    <property type="entry name" value="Thioredoxin-like"/>
    <property type="match status" value="1"/>
</dbReference>
<accession>Q9CQ79</accession>
<accession>Q3TKD2</accession>
<evidence type="ECO:0000250" key="1"/>
<evidence type="ECO:0000250" key="2">
    <source>
        <dbReference type="UniProtKB" id="O14530"/>
    </source>
</evidence>
<evidence type="ECO:0000269" key="3">
    <source>
    </source>
</evidence>
<sequence length="226" mass="26260">MEGNGSVDMFSEVLENQFLQAAKLVENHLDSEIQKLDQIGEDELELLKEKRLAALRKAQQQKQEWLSKGHGEYREIGSERDFFQEVKESEKVVCHFYRDTTFRCKILDRHLAILAKKHLETKFLKLNVEKAPFLCERLRIKVIPTLALLRDGKTQDYVVGFTDLGNTDDFTTETLEWRLGCSDVINYSGNLMEPPFQSQKKFGTNFTKLEKKTIRGKKYDSDSDDD</sequence>